<organism>
    <name type="scientific">Limosilactobacillus fermentum (strain NBRC 3956 / LMG 18251)</name>
    <name type="common">Lactobacillus fermentum</name>
    <dbReference type="NCBI Taxonomy" id="334390"/>
    <lineage>
        <taxon>Bacteria</taxon>
        <taxon>Bacillati</taxon>
        <taxon>Bacillota</taxon>
        <taxon>Bacilli</taxon>
        <taxon>Lactobacillales</taxon>
        <taxon>Lactobacillaceae</taxon>
        <taxon>Limosilactobacillus</taxon>
    </lineage>
</organism>
<evidence type="ECO:0000255" key="1">
    <source>
        <dbReference type="HAMAP-Rule" id="MF_00176"/>
    </source>
</evidence>
<dbReference type="EC" id="6.1.1.11" evidence="1"/>
<dbReference type="EMBL" id="AP008937">
    <property type="protein sequence ID" value="BAG26402.1"/>
    <property type="molecule type" value="Genomic_DNA"/>
</dbReference>
<dbReference type="RefSeq" id="WP_012390695.1">
    <property type="nucleotide sequence ID" value="NC_010610.1"/>
</dbReference>
<dbReference type="SMR" id="B2GF13"/>
<dbReference type="KEGG" id="lfe:LAF_0066"/>
<dbReference type="PATRIC" id="fig|334390.5.peg.68"/>
<dbReference type="eggNOG" id="COG0172">
    <property type="taxonomic scope" value="Bacteria"/>
</dbReference>
<dbReference type="HOGENOM" id="CLU_023797_1_1_9"/>
<dbReference type="UniPathway" id="UPA00906">
    <property type="reaction ID" value="UER00895"/>
</dbReference>
<dbReference type="Proteomes" id="UP000001697">
    <property type="component" value="Chromosome"/>
</dbReference>
<dbReference type="GO" id="GO:0005737">
    <property type="term" value="C:cytoplasm"/>
    <property type="evidence" value="ECO:0007669"/>
    <property type="project" value="UniProtKB-SubCell"/>
</dbReference>
<dbReference type="GO" id="GO:0005524">
    <property type="term" value="F:ATP binding"/>
    <property type="evidence" value="ECO:0007669"/>
    <property type="project" value="UniProtKB-UniRule"/>
</dbReference>
<dbReference type="GO" id="GO:0140096">
    <property type="term" value="F:catalytic activity, acting on a protein"/>
    <property type="evidence" value="ECO:0007669"/>
    <property type="project" value="UniProtKB-ARBA"/>
</dbReference>
<dbReference type="GO" id="GO:0004828">
    <property type="term" value="F:serine-tRNA ligase activity"/>
    <property type="evidence" value="ECO:0007669"/>
    <property type="project" value="UniProtKB-UniRule"/>
</dbReference>
<dbReference type="GO" id="GO:0016740">
    <property type="term" value="F:transferase activity"/>
    <property type="evidence" value="ECO:0007669"/>
    <property type="project" value="UniProtKB-ARBA"/>
</dbReference>
<dbReference type="GO" id="GO:0016260">
    <property type="term" value="P:selenocysteine biosynthetic process"/>
    <property type="evidence" value="ECO:0007669"/>
    <property type="project" value="UniProtKB-UniRule"/>
</dbReference>
<dbReference type="GO" id="GO:0006434">
    <property type="term" value="P:seryl-tRNA aminoacylation"/>
    <property type="evidence" value="ECO:0007669"/>
    <property type="project" value="UniProtKB-UniRule"/>
</dbReference>
<dbReference type="CDD" id="cd00770">
    <property type="entry name" value="SerRS_core"/>
    <property type="match status" value="1"/>
</dbReference>
<dbReference type="Gene3D" id="3.30.930.10">
    <property type="entry name" value="Bira Bifunctional Protein, Domain 2"/>
    <property type="match status" value="1"/>
</dbReference>
<dbReference type="Gene3D" id="1.10.287.40">
    <property type="entry name" value="Serine-tRNA synthetase, tRNA binding domain"/>
    <property type="match status" value="1"/>
</dbReference>
<dbReference type="HAMAP" id="MF_00176">
    <property type="entry name" value="Ser_tRNA_synth_type1"/>
    <property type="match status" value="1"/>
</dbReference>
<dbReference type="InterPro" id="IPR002314">
    <property type="entry name" value="aa-tRNA-synt_IIb"/>
</dbReference>
<dbReference type="InterPro" id="IPR006195">
    <property type="entry name" value="aa-tRNA-synth_II"/>
</dbReference>
<dbReference type="InterPro" id="IPR045864">
    <property type="entry name" value="aa-tRNA-synth_II/BPL/LPL"/>
</dbReference>
<dbReference type="InterPro" id="IPR002317">
    <property type="entry name" value="Ser-tRNA-ligase_type_1"/>
</dbReference>
<dbReference type="InterPro" id="IPR015866">
    <property type="entry name" value="Ser-tRNA-synth_1_N"/>
</dbReference>
<dbReference type="InterPro" id="IPR042103">
    <property type="entry name" value="SerRS_1_N_sf"/>
</dbReference>
<dbReference type="InterPro" id="IPR033729">
    <property type="entry name" value="SerRS_core"/>
</dbReference>
<dbReference type="InterPro" id="IPR010978">
    <property type="entry name" value="tRNA-bd_arm"/>
</dbReference>
<dbReference type="NCBIfam" id="TIGR00414">
    <property type="entry name" value="serS"/>
    <property type="match status" value="1"/>
</dbReference>
<dbReference type="PANTHER" id="PTHR43697:SF1">
    <property type="entry name" value="SERINE--TRNA LIGASE"/>
    <property type="match status" value="1"/>
</dbReference>
<dbReference type="PANTHER" id="PTHR43697">
    <property type="entry name" value="SERYL-TRNA SYNTHETASE"/>
    <property type="match status" value="1"/>
</dbReference>
<dbReference type="Pfam" id="PF02403">
    <property type="entry name" value="Seryl_tRNA_N"/>
    <property type="match status" value="1"/>
</dbReference>
<dbReference type="Pfam" id="PF00587">
    <property type="entry name" value="tRNA-synt_2b"/>
    <property type="match status" value="1"/>
</dbReference>
<dbReference type="PIRSF" id="PIRSF001529">
    <property type="entry name" value="Ser-tRNA-synth_IIa"/>
    <property type="match status" value="1"/>
</dbReference>
<dbReference type="PRINTS" id="PR00981">
    <property type="entry name" value="TRNASYNTHSER"/>
</dbReference>
<dbReference type="SUPFAM" id="SSF55681">
    <property type="entry name" value="Class II aaRS and biotin synthetases"/>
    <property type="match status" value="1"/>
</dbReference>
<dbReference type="SUPFAM" id="SSF46589">
    <property type="entry name" value="tRNA-binding arm"/>
    <property type="match status" value="1"/>
</dbReference>
<dbReference type="PROSITE" id="PS50862">
    <property type="entry name" value="AA_TRNA_LIGASE_II"/>
    <property type="match status" value="1"/>
</dbReference>
<comment type="function">
    <text evidence="1">Catalyzes the attachment of serine to tRNA(Ser). Is also able to aminoacylate tRNA(Sec) with serine, to form the misacylated tRNA L-seryl-tRNA(Sec), which will be further converted into selenocysteinyl-tRNA(Sec).</text>
</comment>
<comment type="catalytic activity">
    <reaction evidence="1">
        <text>tRNA(Ser) + L-serine + ATP = L-seryl-tRNA(Ser) + AMP + diphosphate + H(+)</text>
        <dbReference type="Rhea" id="RHEA:12292"/>
        <dbReference type="Rhea" id="RHEA-COMP:9669"/>
        <dbReference type="Rhea" id="RHEA-COMP:9703"/>
        <dbReference type="ChEBI" id="CHEBI:15378"/>
        <dbReference type="ChEBI" id="CHEBI:30616"/>
        <dbReference type="ChEBI" id="CHEBI:33019"/>
        <dbReference type="ChEBI" id="CHEBI:33384"/>
        <dbReference type="ChEBI" id="CHEBI:78442"/>
        <dbReference type="ChEBI" id="CHEBI:78533"/>
        <dbReference type="ChEBI" id="CHEBI:456215"/>
        <dbReference type="EC" id="6.1.1.11"/>
    </reaction>
</comment>
<comment type="catalytic activity">
    <reaction evidence="1">
        <text>tRNA(Sec) + L-serine + ATP = L-seryl-tRNA(Sec) + AMP + diphosphate + H(+)</text>
        <dbReference type="Rhea" id="RHEA:42580"/>
        <dbReference type="Rhea" id="RHEA-COMP:9742"/>
        <dbReference type="Rhea" id="RHEA-COMP:10128"/>
        <dbReference type="ChEBI" id="CHEBI:15378"/>
        <dbReference type="ChEBI" id="CHEBI:30616"/>
        <dbReference type="ChEBI" id="CHEBI:33019"/>
        <dbReference type="ChEBI" id="CHEBI:33384"/>
        <dbReference type="ChEBI" id="CHEBI:78442"/>
        <dbReference type="ChEBI" id="CHEBI:78533"/>
        <dbReference type="ChEBI" id="CHEBI:456215"/>
        <dbReference type="EC" id="6.1.1.11"/>
    </reaction>
</comment>
<comment type="pathway">
    <text evidence="1">Aminoacyl-tRNA biosynthesis; selenocysteinyl-tRNA(Sec) biosynthesis; L-seryl-tRNA(Sec) from L-serine and tRNA(Sec): step 1/1.</text>
</comment>
<comment type="subunit">
    <text evidence="1">Homodimer. The tRNA molecule binds across the dimer.</text>
</comment>
<comment type="subcellular location">
    <subcellularLocation>
        <location evidence="1">Cytoplasm</location>
    </subcellularLocation>
</comment>
<comment type="domain">
    <text evidence="1">Consists of two distinct domains, a catalytic core and a N-terminal extension that is involved in tRNA binding.</text>
</comment>
<comment type="similarity">
    <text evidence="1">Belongs to the class-II aminoacyl-tRNA synthetase family. Type-1 seryl-tRNA synthetase subfamily.</text>
</comment>
<feature type="chain" id="PRO_1000098084" description="Serine--tRNA ligase">
    <location>
        <begin position="1"/>
        <end position="432"/>
    </location>
</feature>
<feature type="binding site" evidence="1">
    <location>
        <begin position="230"/>
        <end position="232"/>
    </location>
    <ligand>
        <name>L-serine</name>
        <dbReference type="ChEBI" id="CHEBI:33384"/>
    </ligand>
</feature>
<feature type="binding site" evidence="1">
    <location>
        <begin position="261"/>
        <end position="263"/>
    </location>
    <ligand>
        <name>ATP</name>
        <dbReference type="ChEBI" id="CHEBI:30616"/>
    </ligand>
</feature>
<feature type="binding site" evidence="1">
    <location>
        <position position="284"/>
    </location>
    <ligand>
        <name>L-serine</name>
        <dbReference type="ChEBI" id="CHEBI:33384"/>
    </ligand>
</feature>
<feature type="binding site" evidence="1">
    <location>
        <begin position="348"/>
        <end position="351"/>
    </location>
    <ligand>
        <name>ATP</name>
        <dbReference type="ChEBI" id="CHEBI:30616"/>
    </ligand>
</feature>
<feature type="binding site" evidence="1">
    <location>
        <position position="383"/>
    </location>
    <ligand>
        <name>L-serine</name>
        <dbReference type="ChEBI" id="CHEBI:33384"/>
    </ligand>
</feature>
<sequence>MLDIKQIRQQPDWFKEKLATRGVQPEEIDTVLELDAKRRELLQQTETLKAKRNEASKKIGEAKRAKQSADEAIAEMRQVGEDIKALDEQVEANDKDLFDKLAHLPNVPHEGVPVSLTEDGAEELRKVGQARQFDFEPKHHWEIGENLGILDFERAGKVSGSRFVYYVGLGAQLERALYNFMLDEHMKEGYTEVLPPYIVNAHAMYGTGQFPKFKQDVYQVNGEDMTLIPTAEVPLTNYFAGEVIPAEKLPVYVTALTPSFRSEAGSAGRDTRGLIRMHQFNKVEMVKYTKQDQSWEELDKMTANAENILQKLGLPYHVITLTTSDMSFTASETHDLELWMPAQNKYREVSSCSNCLDFQARRLHMQYRDENGKLQYVHTLNGSGLAVGRTLAAILENYQNEDGSVTIPEVLVPYFHGITKITKENAVPFNNK</sequence>
<name>SYS_LIMF3</name>
<proteinExistence type="inferred from homology"/>
<gene>
    <name evidence="1" type="primary">serS</name>
    <name type="ordered locus">LAF_0066</name>
</gene>
<protein>
    <recommendedName>
        <fullName evidence="1">Serine--tRNA ligase</fullName>
        <ecNumber evidence="1">6.1.1.11</ecNumber>
    </recommendedName>
    <alternativeName>
        <fullName evidence="1">Seryl-tRNA synthetase</fullName>
        <shortName evidence="1">SerRS</shortName>
    </alternativeName>
    <alternativeName>
        <fullName evidence="1">Seryl-tRNA(Ser/Sec) synthetase</fullName>
    </alternativeName>
</protein>
<keyword id="KW-0030">Aminoacyl-tRNA synthetase</keyword>
<keyword id="KW-0067">ATP-binding</keyword>
<keyword id="KW-0963">Cytoplasm</keyword>
<keyword id="KW-0436">Ligase</keyword>
<keyword id="KW-0547">Nucleotide-binding</keyword>
<keyword id="KW-0648">Protein biosynthesis</keyword>
<keyword id="KW-1185">Reference proteome</keyword>
<reference key="1">
    <citation type="journal article" date="2008" name="DNA Res.">
        <title>Comparative genome analysis of Lactobacillus reuteri and Lactobacillus fermentum reveal a genomic island for reuterin and cobalamin production.</title>
        <authorList>
            <person name="Morita H."/>
            <person name="Toh H."/>
            <person name="Fukuda S."/>
            <person name="Horikawa H."/>
            <person name="Oshima K."/>
            <person name="Suzuki T."/>
            <person name="Murakami M."/>
            <person name="Hisamatsu S."/>
            <person name="Kato Y."/>
            <person name="Takizawa T."/>
            <person name="Fukuoka H."/>
            <person name="Yoshimura T."/>
            <person name="Itoh K."/>
            <person name="O'Sullivan D.J."/>
            <person name="McKay L.L."/>
            <person name="Ohno H."/>
            <person name="Kikuchi J."/>
            <person name="Masaoka T."/>
            <person name="Hattori M."/>
        </authorList>
    </citation>
    <scope>NUCLEOTIDE SEQUENCE [LARGE SCALE GENOMIC DNA]</scope>
    <source>
        <strain>NBRC 3956 / LMG 18251</strain>
    </source>
</reference>
<accession>B2GF13</accession>